<accession>Q62981</accession>
<accession>Q499Q6</accession>
<sequence>MLESLQPESELLHDEPDPGEKVYECDECRKTFSLEQHFVEHKKTHGGEKSPECTGCGEEFSKASSLTRHLRSRSRRESYKCGNCGRTFSQRGNFLSHQKQHAEERPSESKKTPVPMTTIVRNQRNAGNKPYACKECGKAFNGKSYLKEHEKIHTGEKPFECNQCGRAFSQKQYLIKHQNVHSGKKPFKCNECGKAFSQKENLIIHQRIHTGEKPYECKGCGKAFIQKSSLIRHQRSHTGEKPYTCKECGKAFSGKSNLTEHEKIHIGEKPYKCNECGTIFRQKQYLIKHHNIHTGEKPYECNKCGKAFSRITSLIVHVRIHTGDKPYECKVCGKAFCQSSSLTVHMRSHTGEKPYGCNECGKAFSQFSTLALHMRIHTGEKPYQCSECGKAFSQKSHHIRHQRIHIH</sequence>
<evidence type="ECO:0000255" key="1">
    <source>
        <dbReference type="PROSITE-ProRule" id="PRU00042"/>
    </source>
</evidence>
<evidence type="ECO:0000256" key="2">
    <source>
        <dbReference type="SAM" id="MobiDB-lite"/>
    </source>
</evidence>
<evidence type="ECO:0000269" key="3">
    <source>
    </source>
</evidence>
<evidence type="ECO:0000305" key="4"/>
<gene>
    <name type="primary">Znf260</name>
    <name type="synonym">Pex1</name>
    <name type="synonym">Zfp260</name>
</gene>
<comment type="function">
    <text evidence="3">Transcription factor that acts as a cardiac regulator and an effector of alpha1-adrenergic signaling. Binds to PE response elements (PERE) present in the promoter of genes such as ANF/NPPA and acts as a direct transcriptional activator of NPPA. Also acts as a cofactor with GATA4, a key cardiac regulator.</text>
</comment>
<comment type="subunit">
    <text evidence="3">Binds DNA. Interacts with GATA4.</text>
</comment>
<comment type="subcellular location">
    <subcellularLocation>
        <location evidence="3">Nucleus</location>
    </subcellularLocation>
</comment>
<comment type="tissue specificity">
    <text evidence="3">Expressed in both embryonic, fetal and adult heart. Also expressed in lung, skeletal muscle and adrenal glands.</text>
</comment>
<comment type="developmental stage">
    <text evidence="3">Expressed in cardiomyocytes from 14 dpc.</text>
</comment>
<comment type="induction">
    <text evidence="3">Up-regulated by activation of alpha1-adrenergic receptors.</text>
</comment>
<comment type="similarity">
    <text evidence="4">Belongs to the krueppel C2H2-type zinc-finger protein family.</text>
</comment>
<organism>
    <name type="scientific">Rattus norvegicus</name>
    <name type="common">Rat</name>
    <dbReference type="NCBI Taxonomy" id="10116"/>
    <lineage>
        <taxon>Eukaryota</taxon>
        <taxon>Metazoa</taxon>
        <taxon>Chordata</taxon>
        <taxon>Craniata</taxon>
        <taxon>Vertebrata</taxon>
        <taxon>Euteleostomi</taxon>
        <taxon>Mammalia</taxon>
        <taxon>Eutheria</taxon>
        <taxon>Euarchontoglires</taxon>
        <taxon>Glires</taxon>
        <taxon>Rodentia</taxon>
        <taxon>Myomorpha</taxon>
        <taxon>Muroidea</taxon>
        <taxon>Muridae</taxon>
        <taxon>Murinae</taxon>
        <taxon>Rattus</taxon>
    </lineage>
</organism>
<proteinExistence type="evidence at protein level"/>
<protein>
    <recommendedName>
        <fullName>Zinc finger protein 260</fullName>
        <shortName>Zfp-260</shortName>
    </recommendedName>
    <alternativeName>
        <fullName>Pancreas-only zinc finger protein 1</fullName>
        <shortName>POZF-1</shortName>
    </alternativeName>
</protein>
<feature type="chain" id="PRO_0000047322" description="Zinc finger protein 260">
    <location>
        <begin position="1"/>
        <end position="407"/>
    </location>
</feature>
<feature type="zinc finger region" description="C2H2-type 1" evidence="1">
    <location>
        <begin position="23"/>
        <end position="45"/>
    </location>
</feature>
<feature type="zinc finger region" description="C2H2-type 2; degenerate" evidence="1">
    <location>
        <begin position="51"/>
        <end position="73"/>
    </location>
</feature>
<feature type="zinc finger region" description="C2H2-type 3" evidence="1">
    <location>
        <begin position="79"/>
        <end position="101"/>
    </location>
</feature>
<feature type="zinc finger region" description="C2H2-type 4" evidence="1">
    <location>
        <begin position="131"/>
        <end position="153"/>
    </location>
</feature>
<feature type="zinc finger region" description="C2H2-type 5" evidence="1">
    <location>
        <begin position="159"/>
        <end position="181"/>
    </location>
</feature>
<feature type="zinc finger region" description="C2H2-type 6" evidence="1">
    <location>
        <begin position="187"/>
        <end position="209"/>
    </location>
</feature>
<feature type="zinc finger region" description="C2H2-type 7" evidence="1">
    <location>
        <begin position="215"/>
        <end position="237"/>
    </location>
</feature>
<feature type="zinc finger region" description="C2H2-type 8" evidence="1">
    <location>
        <begin position="243"/>
        <end position="265"/>
    </location>
</feature>
<feature type="zinc finger region" description="C2H2-type 9" evidence="1">
    <location>
        <begin position="271"/>
        <end position="293"/>
    </location>
</feature>
<feature type="zinc finger region" description="C2H2-type 10" evidence="1">
    <location>
        <begin position="299"/>
        <end position="321"/>
    </location>
</feature>
<feature type="zinc finger region" description="C2H2-type 11" evidence="1">
    <location>
        <begin position="327"/>
        <end position="349"/>
    </location>
</feature>
<feature type="zinc finger region" description="C2H2-type 12" evidence="1">
    <location>
        <begin position="355"/>
        <end position="377"/>
    </location>
</feature>
<feature type="zinc finger region" description="C2H2-type 13" evidence="1">
    <location>
        <begin position="383"/>
        <end position="405"/>
    </location>
</feature>
<feature type="region of interest" description="Disordered" evidence="2">
    <location>
        <begin position="1"/>
        <end position="21"/>
    </location>
</feature>
<feature type="compositionally biased region" description="Basic and acidic residues" evidence="2">
    <location>
        <begin position="10"/>
        <end position="21"/>
    </location>
</feature>
<reference key="1">
    <citation type="submission" date="1996-05" db="EMBL/GenBank/DDBJ databases">
        <title>Novel pancreas enriched zinc finger encoding gene.</title>
        <authorList>
            <person name="Urrutia R."/>
            <person name="Mesa K."/>
            <person name="Gebelein B."/>
        </authorList>
    </citation>
    <scope>NUCLEOTIDE SEQUENCE [MRNA]</scope>
    <source>
        <strain>Wistar</strain>
        <tissue>Pancreas</tissue>
    </source>
</reference>
<reference key="2">
    <citation type="journal article" date="2004" name="Genome Res.">
        <title>The status, quality, and expansion of the NIH full-length cDNA project: the Mammalian Gene Collection (MGC).</title>
        <authorList>
            <consortium name="The MGC Project Team"/>
        </authorList>
    </citation>
    <scope>NUCLEOTIDE SEQUENCE [LARGE SCALE MRNA]</scope>
    <source>
        <tissue>Prostate</tissue>
    </source>
</reference>
<reference key="3">
    <citation type="journal article" date="2005" name="Mol. Cell. Biol.">
        <title>The zinc finger-only protein Zfp260 is a novel cardiac regulator and a nuclear effector of alpha1-adrenergic signaling.</title>
        <authorList>
            <person name="Debrus S."/>
            <person name="Rahbani L."/>
            <person name="Marttila M."/>
            <person name="Delorme B."/>
            <person name="Paradis P."/>
            <person name="Nemer M."/>
        </authorList>
    </citation>
    <scope>FUNCTION</scope>
    <scope>SUBCELLULAR LOCATION</scope>
    <scope>DNA-BINDING</scope>
    <scope>TISSUE SPECIFICITY</scope>
    <scope>DEVELOPMENTAL STAGE</scope>
    <scope>INDUCTION</scope>
    <scope>INTERACTION WITH GATA4</scope>
</reference>
<dbReference type="EMBL" id="U56862">
    <property type="protein sequence ID" value="AAB01227.1"/>
    <property type="molecule type" value="mRNA"/>
</dbReference>
<dbReference type="EMBL" id="BC099805">
    <property type="protein sequence ID" value="AAH99805.1"/>
    <property type="molecule type" value="mRNA"/>
</dbReference>
<dbReference type="RefSeq" id="NP_059060.1">
    <property type="nucleotide sequence ID" value="NM_017364.4"/>
</dbReference>
<dbReference type="SMR" id="Q62981"/>
<dbReference type="STRING" id="10116.ENSRNOP00000047459"/>
<dbReference type="PhosphoSitePlus" id="Q62981"/>
<dbReference type="PaxDb" id="10116-ENSRNOP00000047459"/>
<dbReference type="Ensembl" id="ENSRNOT00000049877.5">
    <property type="protein sequence ID" value="ENSRNOP00000047459.3"/>
    <property type="gene ID" value="ENSRNOG00000020762.7"/>
</dbReference>
<dbReference type="Ensembl" id="ENSRNOT00000074301.3">
    <property type="protein sequence ID" value="ENSRNOP00000065656.1"/>
    <property type="gene ID" value="ENSRNOG00000020762.7"/>
</dbReference>
<dbReference type="Ensembl" id="ENSRNOT00000103714.1">
    <property type="protein sequence ID" value="ENSRNOP00000088893.1"/>
    <property type="gene ID" value="ENSRNOG00000020762.7"/>
</dbReference>
<dbReference type="Ensembl" id="ENSRNOT00000113539.1">
    <property type="protein sequence ID" value="ENSRNOP00000087535.1"/>
    <property type="gene ID" value="ENSRNOG00000020762.7"/>
</dbReference>
<dbReference type="GeneID" id="53982"/>
<dbReference type="KEGG" id="rno:53982"/>
<dbReference type="AGR" id="RGD:621205"/>
<dbReference type="CTD" id="26466"/>
<dbReference type="RGD" id="621205">
    <property type="gene designation" value="Zfp260"/>
</dbReference>
<dbReference type="eggNOG" id="KOG1721">
    <property type="taxonomic scope" value="Eukaryota"/>
</dbReference>
<dbReference type="GeneTree" id="ENSGT00940000162468"/>
<dbReference type="HOGENOM" id="CLU_002678_44_0_1"/>
<dbReference type="InParanoid" id="Q62981"/>
<dbReference type="OMA" id="FSQKSHY"/>
<dbReference type="OrthoDB" id="654211at2759"/>
<dbReference type="PhylomeDB" id="Q62981"/>
<dbReference type="TreeFam" id="TF341817"/>
<dbReference type="PRO" id="PR:Q62981"/>
<dbReference type="Proteomes" id="UP000002494">
    <property type="component" value="Chromosome 1"/>
</dbReference>
<dbReference type="Bgee" id="ENSRNOG00000020762">
    <property type="expression patterns" value="Expressed in Ammon's horn and 20 other cell types or tissues"/>
</dbReference>
<dbReference type="GO" id="GO:0005634">
    <property type="term" value="C:nucleus"/>
    <property type="evidence" value="ECO:0000318"/>
    <property type="project" value="GO_Central"/>
</dbReference>
<dbReference type="GO" id="GO:0000981">
    <property type="term" value="F:DNA-binding transcription factor activity, RNA polymerase II-specific"/>
    <property type="evidence" value="ECO:0000318"/>
    <property type="project" value="GO_Central"/>
</dbReference>
<dbReference type="GO" id="GO:0000978">
    <property type="term" value="F:RNA polymerase II cis-regulatory region sequence-specific DNA binding"/>
    <property type="evidence" value="ECO:0000318"/>
    <property type="project" value="GO_Central"/>
</dbReference>
<dbReference type="GO" id="GO:0008270">
    <property type="term" value="F:zinc ion binding"/>
    <property type="evidence" value="ECO:0007669"/>
    <property type="project" value="UniProtKB-KW"/>
</dbReference>
<dbReference type="GO" id="GO:0006357">
    <property type="term" value="P:regulation of transcription by RNA polymerase II"/>
    <property type="evidence" value="ECO:0000318"/>
    <property type="project" value="GO_Central"/>
</dbReference>
<dbReference type="FunFam" id="3.30.160.60:FF:002984">
    <property type="match status" value="1"/>
</dbReference>
<dbReference type="FunFam" id="3.30.160.60:FF:000001">
    <property type="entry name" value="Zinc finger protein 1 homolog"/>
    <property type="match status" value="1"/>
</dbReference>
<dbReference type="FunFam" id="3.30.160.60:FF:000794">
    <property type="entry name" value="zinc finger protein 2 isoform X2"/>
    <property type="match status" value="1"/>
</dbReference>
<dbReference type="FunFam" id="3.30.160.60:FF:000919">
    <property type="entry name" value="Zinc finger protein 260"/>
    <property type="match status" value="2"/>
</dbReference>
<dbReference type="FunFam" id="3.30.160.60:FF:001408">
    <property type="entry name" value="Zinc finger protein 260"/>
    <property type="match status" value="1"/>
</dbReference>
<dbReference type="FunFam" id="3.30.160.60:FF:000348">
    <property type="entry name" value="zinc finger protein 260"/>
    <property type="match status" value="1"/>
</dbReference>
<dbReference type="FunFam" id="3.30.160.60:FF:000224">
    <property type="entry name" value="Zinc finger protein 329"/>
    <property type="match status" value="1"/>
</dbReference>
<dbReference type="FunFam" id="3.30.160.60:FF:002343">
    <property type="entry name" value="Zinc finger protein 33A"/>
    <property type="match status" value="1"/>
</dbReference>
<dbReference type="FunFam" id="3.30.160.60:FF:000016">
    <property type="entry name" value="zinc finger protein 37 homolog"/>
    <property type="match status" value="1"/>
</dbReference>
<dbReference type="FunFam" id="3.30.160.60:FF:001060">
    <property type="entry name" value="Zinc finger protein OZF"/>
    <property type="match status" value="1"/>
</dbReference>
<dbReference type="Gene3D" id="3.30.160.60">
    <property type="entry name" value="Classic Zinc Finger"/>
    <property type="match status" value="13"/>
</dbReference>
<dbReference type="InterPro" id="IPR036236">
    <property type="entry name" value="Znf_C2H2_sf"/>
</dbReference>
<dbReference type="InterPro" id="IPR013087">
    <property type="entry name" value="Znf_C2H2_type"/>
</dbReference>
<dbReference type="PANTHER" id="PTHR23226">
    <property type="entry name" value="ZINC FINGER AND SCAN DOMAIN-CONTAINING"/>
    <property type="match status" value="1"/>
</dbReference>
<dbReference type="PANTHER" id="PTHR23226:SF366">
    <property type="entry name" value="ZINC FINGER PROTEIN ZFP2"/>
    <property type="match status" value="1"/>
</dbReference>
<dbReference type="Pfam" id="PF00096">
    <property type="entry name" value="zf-C2H2"/>
    <property type="match status" value="10"/>
</dbReference>
<dbReference type="Pfam" id="PF13912">
    <property type="entry name" value="zf-C2H2_6"/>
    <property type="match status" value="1"/>
</dbReference>
<dbReference type="Pfam" id="PF13465">
    <property type="entry name" value="zf-H2C2_2"/>
    <property type="match status" value="1"/>
</dbReference>
<dbReference type="SMART" id="SM00355">
    <property type="entry name" value="ZnF_C2H2"/>
    <property type="match status" value="13"/>
</dbReference>
<dbReference type="SUPFAM" id="SSF57667">
    <property type="entry name" value="beta-beta-alpha zinc fingers"/>
    <property type="match status" value="7"/>
</dbReference>
<dbReference type="PROSITE" id="PS00028">
    <property type="entry name" value="ZINC_FINGER_C2H2_1"/>
    <property type="match status" value="12"/>
</dbReference>
<dbReference type="PROSITE" id="PS50157">
    <property type="entry name" value="ZINC_FINGER_C2H2_2"/>
    <property type="match status" value="13"/>
</dbReference>
<keyword id="KW-0010">Activator</keyword>
<keyword id="KW-0217">Developmental protein</keyword>
<keyword id="KW-0238">DNA-binding</keyword>
<keyword id="KW-0479">Metal-binding</keyword>
<keyword id="KW-0539">Nucleus</keyword>
<keyword id="KW-1185">Reference proteome</keyword>
<keyword id="KW-0677">Repeat</keyword>
<keyword id="KW-0804">Transcription</keyword>
<keyword id="KW-0805">Transcription regulation</keyword>
<keyword id="KW-0862">Zinc</keyword>
<keyword id="KW-0863">Zinc-finger</keyword>
<name>ZN260_RAT</name>